<name>RUVC_WOLSU</name>
<feature type="chain" id="PRO_0000183149" description="Crossover junction endodeoxyribonuclease RuvC">
    <location>
        <begin position="1"/>
        <end position="162"/>
    </location>
</feature>
<feature type="active site" evidence="1">
    <location>
        <position position="7"/>
    </location>
</feature>
<feature type="active site" evidence="1">
    <location>
        <position position="67"/>
    </location>
</feature>
<feature type="active site" evidence="1">
    <location>
        <position position="140"/>
    </location>
</feature>
<feature type="binding site" evidence="1">
    <location>
        <position position="7"/>
    </location>
    <ligand>
        <name>Mg(2+)</name>
        <dbReference type="ChEBI" id="CHEBI:18420"/>
        <label>1</label>
    </ligand>
</feature>
<feature type="binding site" evidence="1">
    <location>
        <position position="67"/>
    </location>
    <ligand>
        <name>Mg(2+)</name>
        <dbReference type="ChEBI" id="CHEBI:18420"/>
        <label>2</label>
    </ligand>
</feature>
<feature type="binding site" evidence="1">
    <location>
        <position position="140"/>
    </location>
    <ligand>
        <name>Mg(2+)</name>
        <dbReference type="ChEBI" id="CHEBI:18420"/>
        <label>1</label>
    </ligand>
</feature>
<sequence>MNILGIDPGSRNCGYAILHHDPKKGNRLVEAGLIKIKERTLQHQILEFVEGIDLVLKNHSIDEVAIEDIFYAYNPKTVIKLAQFRGALSLKILQDLGNFYEYTPLQVKKALTGHGKADKSQVAFMVKRLLGLKGEIKPLDITDAIAVAITHSQRIKLGGIPT</sequence>
<organism>
    <name type="scientific">Wolinella succinogenes (strain ATCC 29543 / DSM 1740 / CCUG 13145 / JCM 31913 / LMG 7466 / NCTC 11488 / FDC 602W)</name>
    <name type="common">Vibrio succinogenes</name>
    <dbReference type="NCBI Taxonomy" id="273121"/>
    <lineage>
        <taxon>Bacteria</taxon>
        <taxon>Pseudomonadati</taxon>
        <taxon>Campylobacterota</taxon>
        <taxon>Epsilonproteobacteria</taxon>
        <taxon>Campylobacterales</taxon>
        <taxon>Helicobacteraceae</taxon>
        <taxon>Wolinella</taxon>
    </lineage>
</organism>
<comment type="function">
    <text evidence="1">The RuvA-RuvB-RuvC complex processes Holliday junction (HJ) DNA during genetic recombination and DNA repair. Endonuclease that resolves HJ intermediates. Cleaves cruciform DNA by making single-stranded nicks across the HJ at symmetrical positions within the homologous arms, yielding a 5'-phosphate and a 3'-hydroxyl group; requires a central core of homology in the junction. The consensus cleavage sequence is 5'-(A/T)TT(C/G)-3'. Cleavage occurs on the 3'-side of the TT dinucleotide at the point of strand exchange. HJ branch migration catalyzed by RuvA-RuvB allows RuvC to scan DNA until it finds its consensus sequence, where it cleaves and resolves the cruciform DNA.</text>
</comment>
<comment type="catalytic activity">
    <reaction evidence="1">
        <text>Endonucleolytic cleavage at a junction such as a reciprocal single-stranded crossover between two homologous DNA duplexes (Holliday junction).</text>
        <dbReference type="EC" id="3.1.21.10"/>
    </reaction>
</comment>
<comment type="cofactor">
    <cofactor evidence="1">
        <name>Mg(2+)</name>
        <dbReference type="ChEBI" id="CHEBI:18420"/>
    </cofactor>
    <text evidence="1">Binds 2 Mg(2+) ion per subunit.</text>
</comment>
<comment type="subunit">
    <text evidence="1">Homodimer which binds Holliday junction (HJ) DNA. The HJ becomes 2-fold symmetrical on binding to RuvC with unstacked arms; it has a different conformation from HJ DNA in complex with RuvA. In the full resolvosome a probable DNA-RuvA(4)-RuvB(12)-RuvC(2) complex forms which resolves the HJ.</text>
</comment>
<comment type="subcellular location">
    <subcellularLocation>
        <location evidence="1">Cytoplasm</location>
    </subcellularLocation>
</comment>
<comment type="similarity">
    <text evidence="1">Belongs to the RuvC family.</text>
</comment>
<reference key="1">
    <citation type="journal article" date="2003" name="Proc. Natl. Acad. Sci. U.S.A.">
        <title>Complete genome sequence and analysis of Wolinella succinogenes.</title>
        <authorList>
            <person name="Baar C."/>
            <person name="Eppinger M."/>
            <person name="Raddatz G."/>
            <person name="Simon J."/>
            <person name="Lanz C."/>
            <person name="Klimmek O."/>
            <person name="Nandakumar R."/>
            <person name="Gross R."/>
            <person name="Rosinus A."/>
            <person name="Keller H."/>
            <person name="Jagtap P."/>
            <person name="Linke B."/>
            <person name="Meyer F."/>
            <person name="Lederer H."/>
            <person name="Schuster S.C."/>
        </authorList>
    </citation>
    <scope>NUCLEOTIDE SEQUENCE [LARGE SCALE GENOMIC DNA]</scope>
    <source>
        <strain>ATCC 29543 / DSM 1740 / CCUG 13145 / JCM 31913 / LMG 7466 / NCTC 11488 / FDC 602W</strain>
    </source>
</reference>
<evidence type="ECO:0000255" key="1">
    <source>
        <dbReference type="HAMAP-Rule" id="MF_00034"/>
    </source>
</evidence>
<dbReference type="EC" id="3.1.21.10" evidence="1"/>
<dbReference type="EMBL" id="BX571663">
    <property type="protein sequence ID" value="CAE11217.1"/>
    <property type="molecule type" value="Genomic_DNA"/>
</dbReference>
<dbReference type="RefSeq" id="WP_011139999.1">
    <property type="nucleotide sequence ID" value="NC_005090.1"/>
</dbReference>
<dbReference type="SMR" id="Q7M7L1"/>
<dbReference type="STRING" id="273121.WS2229"/>
<dbReference type="KEGG" id="wsu:WS2229"/>
<dbReference type="eggNOG" id="COG0817">
    <property type="taxonomic scope" value="Bacteria"/>
</dbReference>
<dbReference type="HOGENOM" id="CLU_091257_3_0_7"/>
<dbReference type="Proteomes" id="UP000000422">
    <property type="component" value="Chromosome"/>
</dbReference>
<dbReference type="GO" id="GO:0005737">
    <property type="term" value="C:cytoplasm"/>
    <property type="evidence" value="ECO:0007669"/>
    <property type="project" value="UniProtKB-SubCell"/>
</dbReference>
<dbReference type="GO" id="GO:0048476">
    <property type="term" value="C:Holliday junction resolvase complex"/>
    <property type="evidence" value="ECO:0007669"/>
    <property type="project" value="UniProtKB-UniRule"/>
</dbReference>
<dbReference type="GO" id="GO:0008821">
    <property type="term" value="F:crossover junction DNA endonuclease activity"/>
    <property type="evidence" value="ECO:0007669"/>
    <property type="project" value="UniProtKB-UniRule"/>
</dbReference>
<dbReference type="GO" id="GO:0003677">
    <property type="term" value="F:DNA binding"/>
    <property type="evidence" value="ECO:0007669"/>
    <property type="project" value="UniProtKB-KW"/>
</dbReference>
<dbReference type="GO" id="GO:0000287">
    <property type="term" value="F:magnesium ion binding"/>
    <property type="evidence" value="ECO:0007669"/>
    <property type="project" value="UniProtKB-UniRule"/>
</dbReference>
<dbReference type="GO" id="GO:0006310">
    <property type="term" value="P:DNA recombination"/>
    <property type="evidence" value="ECO:0007669"/>
    <property type="project" value="UniProtKB-UniRule"/>
</dbReference>
<dbReference type="GO" id="GO:0006281">
    <property type="term" value="P:DNA repair"/>
    <property type="evidence" value="ECO:0007669"/>
    <property type="project" value="UniProtKB-UniRule"/>
</dbReference>
<dbReference type="CDD" id="cd16962">
    <property type="entry name" value="RuvC"/>
    <property type="match status" value="1"/>
</dbReference>
<dbReference type="FunFam" id="3.30.420.10:FF:000002">
    <property type="entry name" value="Crossover junction endodeoxyribonuclease RuvC"/>
    <property type="match status" value="1"/>
</dbReference>
<dbReference type="Gene3D" id="3.30.420.10">
    <property type="entry name" value="Ribonuclease H-like superfamily/Ribonuclease H"/>
    <property type="match status" value="1"/>
</dbReference>
<dbReference type="HAMAP" id="MF_00034">
    <property type="entry name" value="RuvC"/>
    <property type="match status" value="1"/>
</dbReference>
<dbReference type="InterPro" id="IPR012337">
    <property type="entry name" value="RNaseH-like_sf"/>
</dbReference>
<dbReference type="InterPro" id="IPR036397">
    <property type="entry name" value="RNaseH_sf"/>
</dbReference>
<dbReference type="InterPro" id="IPR020563">
    <property type="entry name" value="X-over_junc_endoDNase_Mg_BS"/>
</dbReference>
<dbReference type="InterPro" id="IPR002176">
    <property type="entry name" value="X-over_junc_endoDNase_RuvC"/>
</dbReference>
<dbReference type="NCBIfam" id="TIGR00228">
    <property type="entry name" value="ruvC"/>
    <property type="match status" value="1"/>
</dbReference>
<dbReference type="PANTHER" id="PTHR30194">
    <property type="entry name" value="CROSSOVER JUNCTION ENDODEOXYRIBONUCLEASE RUVC"/>
    <property type="match status" value="1"/>
</dbReference>
<dbReference type="PANTHER" id="PTHR30194:SF3">
    <property type="entry name" value="CROSSOVER JUNCTION ENDODEOXYRIBONUCLEASE RUVC"/>
    <property type="match status" value="1"/>
</dbReference>
<dbReference type="Pfam" id="PF02075">
    <property type="entry name" value="RuvC"/>
    <property type="match status" value="1"/>
</dbReference>
<dbReference type="PRINTS" id="PR00696">
    <property type="entry name" value="RSOLVASERUVC"/>
</dbReference>
<dbReference type="SUPFAM" id="SSF53098">
    <property type="entry name" value="Ribonuclease H-like"/>
    <property type="match status" value="1"/>
</dbReference>
<dbReference type="PROSITE" id="PS01321">
    <property type="entry name" value="RUVC"/>
    <property type="match status" value="1"/>
</dbReference>
<keyword id="KW-0963">Cytoplasm</keyword>
<keyword id="KW-0227">DNA damage</keyword>
<keyword id="KW-0233">DNA recombination</keyword>
<keyword id="KW-0234">DNA repair</keyword>
<keyword id="KW-0238">DNA-binding</keyword>
<keyword id="KW-0255">Endonuclease</keyword>
<keyword id="KW-0378">Hydrolase</keyword>
<keyword id="KW-0460">Magnesium</keyword>
<keyword id="KW-0479">Metal-binding</keyword>
<keyword id="KW-0540">Nuclease</keyword>
<keyword id="KW-1185">Reference proteome</keyword>
<accession>Q7M7L1</accession>
<gene>
    <name evidence="1" type="primary">ruvC</name>
    <name type="ordered locus">WS2229</name>
</gene>
<protein>
    <recommendedName>
        <fullName evidence="1">Crossover junction endodeoxyribonuclease RuvC</fullName>
        <ecNumber evidence="1">3.1.21.10</ecNumber>
    </recommendedName>
    <alternativeName>
        <fullName evidence="1">Holliday junction nuclease RuvC</fullName>
    </alternativeName>
    <alternativeName>
        <fullName evidence="1">Holliday junction resolvase RuvC</fullName>
    </alternativeName>
</protein>
<proteinExistence type="inferred from homology"/>